<organism>
    <name type="scientific">Olea europaea</name>
    <name type="common">Common olive</name>
    <dbReference type="NCBI Taxonomy" id="4146"/>
    <lineage>
        <taxon>Eukaryota</taxon>
        <taxon>Viridiplantae</taxon>
        <taxon>Streptophyta</taxon>
        <taxon>Embryophyta</taxon>
        <taxon>Tracheophyta</taxon>
        <taxon>Spermatophyta</taxon>
        <taxon>Magnoliopsida</taxon>
        <taxon>eudicotyledons</taxon>
        <taxon>Gunneridae</taxon>
        <taxon>Pentapetalae</taxon>
        <taxon>asterids</taxon>
        <taxon>lamiids</taxon>
        <taxon>Lamiales</taxon>
        <taxon>Oleaceae</taxon>
        <taxon>Oleeae</taxon>
        <taxon>Olea</taxon>
    </lineage>
</organism>
<feature type="initiator methionine" description="Removed" evidence="1">
    <location>
        <position position="1"/>
    </location>
</feature>
<feature type="chain" id="PRO_0000424996" description="Profilin-1">
    <location>
        <begin position="2"/>
        <end position="134"/>
    </location>
</feature>
<feature type="short sequence motif" description="Involved in PIP2 interaction">
    <location>
        <begin position="84"/>
        <end position="100"/>
    </location>
</feature>
<feature type="modified residue" description="Phosphothreonine" evidence="1">
    <location>
        <position position="114"/>
    </location>
</feature>
<feature type="disulfide bond" evidence="3">
    <location>
        <begin position="13"/>
        <end position="118"/>
    </location>
</feature>
<keyword id="KW-0009">Actin-binding</keyword>
<keyword id="KW-0020">Allergen</keyword>
<keyword id="KW-0963">Cytoplasm</keyword>
<keyword id="KW-0206">Cytoskeleton</keyword>
<keyword id="KW-1015">Disulfide bond</keyword>
<keyword id="KW-0597">Phosphoprotein</keyword>
<evidence type="ECO:0000250" key="1"/>
<evidence type="ECO:0000305" key="2"/>
<evidence type="ECO:0000305" key="3">
    <source>
    </source>
</evidence>
<accession>P0DKE9</accession>
<accession>A4GD57</accession>
<protein>
    <recommendedName>
        <fullName>Profilin-1</fullName>
    </recommendedName>
    <alternativeName>
        <fullName>Pollen allergen Ole e 2</fullName>
    </alternativeName>
    <allergenName>Ole e 2</allergenName>
</protein>
<proteinExistence type="evidence at protein level"/>
<dbReference type="EMBL" id="DQ138350">
    <property type="protein sequence ID" value="AAZ30428.1"/>
    <property type="molecule type" value="mRNA"/>
</dbReference>
<dbReference type="SMR" id="P0DKE9"/>
<dbReference type="GO" id="GO:0005938">
    <property type="term" value="C:cell cortex"/>
    <property type="evidence" value="ECO:0007669"/>
    <property type="project" value="TreeGrafter"/>
</dbReference>
<dbReference type="GO" id="GO:0005856">
    <property type="term" value="C:cytoskeleton"/>
    <property type="evidence" value="ECO:0007669"/>
    <property type="project" value="UniProtKB-SubCell"/>
</dbReference>
<dbReference type="GO" id="GO:0003785">
    <property type="term" value="F:actin monomer binding"/>
    <property type="evidence" value="ECO:0007669"/>
    <property type="project" value="TreeGrafter"/>
</dbReference>
<dbReference type="CDD" id="cd00148">
    <property type="entry name" value="PROF"/>
    <property type="match status" value="1"/>
</dbReference>
<dbReference type="FunFam" id="3.30.450.30:FF:000001">
    <property type="entry name" value="Profilin"/>
    <property type="match status" value="1"/>
</dbReference>
<dbReference type="Gene3D" id="3.30.450.30">
    <property type="entry name" value="Dynein light chain 2a, cytoplasmic"/>
    <property type="match status" value="1"/>
</dbReference>
<dbReference type="InterPro" id="IPR048278">
    <property type="entry name" value="PFN"/>
</dbReference>
<dbReference type="InterPro" id="IPR005455">
    <property type="entry name" value="PFN_euk"/>
</dbReference>
<dbReference type="InterPro" id="IPR036140">
    <property type="entry name" value="PFN_sf"/>
</dbReference>
<dbReference type="InterPro" id="IPR027310">
    <property type="entry name" value="Profilin_CS"/>
</dbReference>
<dbReference type="PANTHER" id="PTHR11604">
    <property type="entry name" value="PROFILIN"/>
    <property type="match status" value="1"/>
</dbReference>
<dbReference type="PANTHER" id="PTHR11604:SF25">
    <property type="entry name" value="PROFILIN-5"/>
    <property type="match status" value="1"/>
</dbReference>
<dbReference type="Pfam" id="PF00235">
    <property type="entry name" value="Profilin"/>
    <property type="match status" value="1"/>
</dbReference>
<dbReference type="PRINTS" id="PR00392">
    <property type="entry name" value="PROFILIN"/>
</dbReference>
<dbReference type="PRINTS" id="PR01640">
    <property type="entry name" value="PROFILINPLNT"/>
</dbReference>
<dbReference type="SMART" id="SM00392">
    <property type="entry name" value="PROF"/>
    <property type="match status" value="1"/>
</dbReference>
<dbReference type="SUPFAM" id="SSF55770">
    <property type="entry name" value="Profilin (actin-binding protein)"/>
    <property type="match status" value="1"/>
</dbReference>
<dbReference type="PROSITE" id="PS00414">
    <property type="entry name" value="PROFILIN"/>
    <property type="match status" value="1"/>
</dbReference>
<comment type="function">
    <text evidence="1">Binds to actin and affects the structure of the cytoskeleton. At high concentrations, profilin prevents the polymerization of actin, whereas it enhances it at low concentrations (By similarity).</text>
</comment>
<comment type="subunit">
    <text evidence="1">Occurs in many kinds of cells as a complex with monomeric actin in a 1:1 ratio.</text>
</comment>
<comment type="subcellular location">
    <subcellularLocation>
        <location evidence="1">Cytoplasm</location>
        <location evidence="1">Cytoskeleton</location>
    </subcellularLocation>
</comment>
<comment type="PTM">
    <text evidence="1">Phosphorylated by MAP kinases.</text>
</comment>
<comment type="polymorphism">
    <text>Several isoforms of the allergen exist due to polymorphism.</text>
</comment>
<comment type="allergen">
    <text>Causes an allergic reaction in human.</text>
</comment>
<comment type="miscellaneous">
    <text evidence="3">The variability of the residues taking part of IgE-binding epitopes might be responsible of the difference in cross-reactivity among olive pollen cultivars, and between distantly related pollen species, leading to a variable range of allergy reactions among atopic patients.</text>
</comment>
<comment type="similarity">
    <text evidence="2">Belongs to the profilin family.</text>
</comment>
<name>PROAE_OLEEU</name>
<sequence>MSWQAYVDDHLMCDIEGHEGHRLTAAAIVGHDGSVWAQSATFPQFKPEEMNGIMTDFNEPGHLAPTGLHLGGTKYMVIQGEAGAVIRGKKGSGGITIKKTGQALVCGIYEEPVTPGQCNMVVERLGDYLLEQGL</sequence>
<reference key="1">
    <citation type="journal article" date="2012" name="PLoS ONE">
        <title>Characterization of profilin polymorphism in pollen with a focus on multifunctionality.</title>
        <authorList>
            <person name="Jimenez-Lopez J.C."/>
            <person name="Morales S."/>
            <person name="Castro A.J."/>
            <person name="Volkmann D."/>
            <person name="Rodriguez-Garcia M.I."/>
            <person name="Alche Jde D."/>
        </authorList>
    </citation>
    <scope>NUCLEOTIDE SEQUENCE [MRNA]</scope>
    <scope>POLYMORPHISM</scope>
    <source>
        <strain>cv. Sevillenca</strain>
        <tissue>Pollen</tissue>
    </source>
</reference>
<reference key="2">
    <citation type="journal article" date="2013" name="PLoS ONE">
        <title>Analysis of the effects of polymorphism on pollen profilin structural functionality and the generation of conformational, T- and B-cell epitopes.</title>
        <authorList>
            <person name="Jimenez-Lopez J.C."/>
            <person name="Rodriguez-Garcia M.I."/>
            <person name="Alche J.D."/>
        </authorList>
    </citation>
    <scope>3D-STRUCTURE MODELING</scope>
    <scope>DISULFIDE BOND</scope>
</reference>